<name>NCAP_TAMVU</name>
<keyword id="KW-0167">Capsid protein</keyword>
<keyword id="KW-1139">Helical capsid protein</keyword>
<keyword id="KW-1035">Host cytoplasm</keyword>
<keyword id="KW-0945">Host-virus interaction</keyword>
<keyword id="KW-0378">Hydrolase</keyword>
<keyword id="KW-1224">Inhibition of host IKBKE by virus</keyword>
<keyword id="KW-1090">Inhibition of host innate immune response by virus</keyword>
<keyword id="KW-1113">Inhibition of host RLR pathway by virus</keyword>
<keyword id="KW-0922">Interferon antiviral system evasion</keyword>
<keyword id="KW-0464">Manganese</keyword>
<keyword id="KW-0479">Metal-binding</keyword>
<keyword id="KW-0687">Ribonucleoprotein</keyword>
<keyword id="KW-0694">RNA-binding</keyword>
<keyword id="KW-0899">Viral immunoevasion</keyword>
<keyword id="KW-0543">Viral nucleoprotein</keyword>
<keyword id="KW-0946">Virion</keyword>
<keyword id="KW-0862">Zinc</keyword>
<accession>Q8BD31</accession>
<dbReference type="EC" id="3.1.13.-" evidence="1"/>
<dbReference type="EMBL" id="AF512828">
    <property type="protein sequence ID" value="AAN32956.1"/>
    <property type="molecule type" value="Genomic_RNA"/>
</dbReference>
<dbReference type="SMR" id="Q8BD31"/>
<dbReference type="Proteomes" id="UP000172871">
    <property type="component" value="Genome"/>
</dbReference>
<dbReference type="GO" id="GO:0019029">
    <property type="term" value="C:helical viral capsid"/>
    <property type="evidence" value="ECO:0007669"/>
    <property type="project" value="UniProtKB-UniRule"/>
</dbReference>
<dbReference type="GO" id="GO:0030430">
    <property type="term" value="C:host cell cytoplasm"/>
    <property type="evidence" value="ECO:0007669"/>
    <property type="project" value="UniProtKB-SubCell"/>
</dbReference>
<dbReference type="GO" id="GO:1990904">
    <property type="term" value="C:ribonucleoprotein complex"/>
    <property type="evidence" value="ECO:0007669"/>
    <property type="project" value="UniProtKB-KW"/>
</dbReference>
<dbReference type="GO" id="GO:0019013">
    <property type="term" value="C:viral nucleocapsid"/>
    <property type="evidence" value="ECO:0007669"/>
    <property type="project" value="UniProtKB-UniRule"/>
</dbReference>
<dbReference type="GO" id="GO:0016787">
    <property type="term" value="F:hydrolase activity"/>
    <property type="evidence" value="ECO:0007669"/>
    <property type="project" value="UniProtKB-KW"/>
</dbReference>
<dbReference type="GO" id="GO:0046872">
    <property type="term" value="F:metal ion binding"/>
    <property type="evidence" value="ECO:0007669"/>
    <property type="project" value="UniProtKB-UniRule"/>
</dbReference>
<dbReference type="GO" id="GO:0003723">
    <property type="term" value="F:RNA binding"/>
    <property type="evidence" value="ECO:0007669"/>
    <property type="project" value="UniProtKB-UniRule"/>
</dbReference>
<dbReference type="GO" id="GO:0039689">
    <property type="term" value="P:negative stranded viral RNA replication"/>
    <property type="evidence" value="ECO:0000250"/>
    <property type="project" value="UniProtKB"/>
</dbReference>
<dbReference type="GO" id="GO:0039696">
    <property type="term" value="P:RNA-templated viral transcription"/>
    <property type="evidence" value="ECO:0000250"/>
    <property type="project" value="UniProtKB"/>
</dbReference>
<dbReference type="GO" id="GO:0039724">
    <property type="term" value="P:symbiont-mediated suppression of host cytoplasmic pattern recognition receptor signaling pathway via inhibition of IKBKE activity"/>
    <property type="evidence" value="ECO:0007669"/>
    <property type="project" value="UniProtKB-UniRule"/>
</dbReference>
<dbReference type="FunFam" id="1.10.150.550:FF:000002">
    <property type="entry name" value="Nucleoprotein"/>
    <property type="match status" value="1"/>
</dbReference>
<dbReference type="Gene3D" id="3.30.420.410">
    <property type="entry name" value="Arenaviral nucleoprotein, C-terminal domain"/>
    <property type="match status" value="1"/>
</dbReference>
<dbReference type="Gene3D" id="1.10.150.550">
    <property type="entry name" value="Arenavirus nucleocapsid protein, head domain"/>
    <property type="match status" value="3"/>
</dbReference>
<dbReference type="HAMAP" id="MF_04085">
    <property type="entry name" value="ARENA_NCAP"/>
    <property type="match status" value="1"/>
</dbReference>
<dbReference type="InterPro" id="IPR000229">
    <property type="entry name" value="Nucleocapsid_arenaviridae"/>
</dbReference>
<dbReference type="InterPro" id="IPR035084">
    <property type="entry name" value="Nucleocapsid_C_arenaviridae"/>
</dbReference>
<dbReference type="InterPro" id="IPR038115">
    <property type="entry name" value="Nucleocapsid_C_sf"/>
</dbReference>
<dbReference type="InterPro" id="IPR035083">
    <property type="entry name" value="Nucleocapsid_N_arenaviridae"/>
</dbReference>
<dbReference type="InterPro" id="IPR012337">
    <property type="entry name" value="RNaseH-like_sf"/>
</dbReference>
<dbReference type="Pfam" id="PF17290">
    <property type="entry name" value="Arena_ncap_C"/>
    <property type="match status" value="1"/>
</dbReference>
<dbReference type="Pfam" id="PF00843">
    <property type="entry name" value="Arena_nucleocap"/>
    <property type="match status" value="1"/>
</dbReference>
<dbReference type="PIRSF" id="PIRSF004029">
    <property type="entry name" value="N_ArenaV"/>
    <property type="match status" value="1"/>
</dbReference>
<dbReference type="SUPFAM" id="SSF53098">
    <property type="entry name" value="Ribonuclease H-like"/>
    <property type="match status" value="1"/>
</dbReference>
<reference key="1">
    <citation type="journal article" date="2002" name="Biochem. Biophys. Res. Commun.">
        <title>Phylogeny of New World arenaviruses based on the complete coding sequences of the small genomic segment identified an evolutionary lineage produced by intrasegmental recombination.</title>
        <authorList>
            <person name="Charrel R.N."/>
            <person name="Feldmann H."/>
            <person name="Fulhorst C.F."/>
            <person name="Khelifa R."/>
            <person name="de Chesse R."/>
            <person name="de Lamballerie X."/>
        </authorList>
    </citation>
    <scope>NUCLEOTIDE SEQUENCE [GENOMIC RNA]</scope>
</reference>
<reference key="2">
    <citation type="journal article" date="2008" name="Curr. Opin. Microbiol.">
        <title>Phylogeny of the genus Arenavirus.</title>
        <authorList>
            <person name="Charrel R.N."/>
            <person name="de Lamballerie X."/>
            <person name="Emonet S."/>
        </authorList>
    </citation>
    <scope>NUCLEOTIDE SEQUENCE [GENOMIC RNA]</scope>
</reference>
<proteinExistence type="inferred from homology"/>
<sequence>MSDQSVPSFRWVQSLKRGLSVWTTPVKADVLNDTRALLSGLDFSKVASVQRMMRRERRDDNDLTNLRDNLKEVDSLMTMRSSQKNMFLKVGSLSKDELMELSSDLNKLKEKVQRSERIIGGSGVYQGNFTTTHLTRRSEILQLVGIQRPGLNRRGGVVKIWDIKEPALLINQFGSTPAVTISCMAEQGGETLNDVVQGLTDLGLLYTAKFPNLGDLEALSNKHSCLKVITQEESQINISGFNLSLSAAVKAGACLVDGGNMLETIKVEESTFTTIIKTLLEIKSKERMFVDITPGQRNPYENLLYKLCLSGEGWPYIASRSQIKGRAWDNTVIEFDVSPRKPPVPIRNGGSPVLTTLKPEVEEQIKRSIESLSVHDTTWIDIEGPPFDPVEMAIYQPDSLKYIHCYRKPNDVKSFKDQSKYCHGILLKDIEFARPGIISAIIKHLPKSMVFTAQGSEDIRRLFDMHGRQDLKIVDVKFTAEQSRVFEELTWKRFEHLCDKHKGIVIKSKKKGTTPASTNAHCALMDCIMFSGVLLGAIPNDKPRRLLPLDILFREPDTTVVL</sequence>
<organism>
    <name type="scientific">Tamiami mammarenavirus (isolate Rat/United States/W 10777/1964)</name>
    <name type="common">TAMV</name>
    <dbReference type="NCBI Taxonomy" id="3052329"/>
    <lineage>
        <taxon>Viruses</taxon>
        <taxon>Riboviria</taxon>
        <taxon>Orthornavirae</taxon>
        <taxon>Negarnaviricota</taxon>
        <taxon>Polyploviricotina</taxon>
        <taxon>Ellioviricetes</taxon>
        <taxon>Bunyavirales</taxon>
        <taxon>Arenaviridae</taxon>
        <taxon>Mammarenavirus</taxon>
    </lineage>
</organism>
<comment type="function">
    <text evidence="1">Encapsidates the genome, protecting it from nucleases. The encapsidated genomic RNA is termed the nucleocapsid (NC). Serves as template for viral transcription and replication. The increased presence of protein N in host cell does not seem to trigger the switch from transcription to replication as observed in other negative strain RNA viruses. Through the interaction with host IKBKE, strongly inhibits the phosphorylation and nuclear translocation of host IRF3, a protein involved in interferon activation pathway, leading to the inhibition of interferon-beta and IRF3-dependent promoters activation. Also encodes a functional 3'-5' exoribonuclease that degrades preferentially dsRNA substrates and thereby participates in the suppression of interferon induction.</text>
</comment>
<comment type="subunit">
    <text evidence="1">Homomultimerizes to form the nucleocapsid. Binds to viral genomic RNA. Interacts with glycoprotein G2. Interacts with protein Z; this interaction probably directs the encapsidated genome to budding sites. Interacts with protein L; this interaction does not interfere with Z-L interaction. Interacts with host IKBKE (via Protein kinase domain); the interaction inhibits IKBKE kinase activity.</text>
</comment>
<comment type="subcellular location">
    <subcellularLocation>
        <location evidence="1">Virion</location>
    </subcellularLocation>
    <subcellularLocation>
        <location evidence="1">Host cytoplasm</location>
    </subcellularLocation>
</comment>
<comment type="domain">
    <text evidence="1">The N-terminal region is important for the cap-binding activity while the C-terminal region contains the 3'-5' exoribonuclease activity. A CCHE zinc binding site is present in the C-terminal region and may thus contribute to the substrate binding and/or the specificity of the exonuclease activity.</text>
</comment>
<comment type="similarity">
    <text evidence="1">Belongs to the arenaviridae nucleocapsid protein family.</text>
</comment>
<feature type="chain" id="PRO_0000361015" description="Nucleoprotein">
    <location>
        <begin position="1"/>
        <end position="562"/>
    </location>
</feature>
<feature type="region of interest" description="Binding site for the cap structure m7GTP" evidence="1">
    <location>
        <begin position="53"/>
        <end position="238"/>
    </location>
</feature>
<feature type="binding site" evidence="1">
    <location>
        <position position="381"/>
    </location>
    <ligand>
        <name>Mn(2+)</name>
        <dbReference type="ChEBI" id="CHEBI:29035"/>
    </ligand>
</feature>
<feature type="binding site" evidence="1">
    <location>
        <position position="383"/>
    </location>
    <ligand>
        <name>Mn(2+)</name>
        <dbReference type="ChEBI" id="CHEBI:29035"/>
    </ligand>
</feature>
<feature type="binding site" evidence="1">
    <location>
        <position position="391"/>
    </location>
    <ligand>
        <name>Zn(2+)</name>
        <dbReference type="ChEBI" id="CHEBI:29105"/>
    </ligand>
</feature>
<feature type="binding site" evidence="1">
    <location>
        <position position="498"/>
    </location>
    <ligand>
        <name>Zn(2+)</name>
        <dbReference type="ChEBI" id="CHEBI:29105"/>
    </ligand>
</feature>
<feature type="binding site" evidence="1">
    <location>
        <position position="501"/>
    </location>
    <ligand>
        <name>Zn(2+)</name>
        <dbReference type="ChEBI" id="CHEBI:29105"/>
    </ligand>
</feature>
<feature type="binding site" evidence="1">
    <location>
        <position position="522"/>
    </location>
    <ligand>
        <name>Zn(2+)</name>
        <dbReference type="ChEBI" id="CHEBI:29105"/>
    </ligand>
</feature>
<feature type="binding site" evidence="1">
    <location>
        <position position="526"/>
    </location>
    <ligand>
        <name>Mn(2+)</name>
        <dbReference type="ChEBI" id="CHEBI:29035"/>
    </ligand>
</feature>
<feature type="site" description="Important for exonuclease activity" evidence="1">
    <location>
        <position position="458"/>
    </location>
</feature>
<organismHost>
    <name type="scientific">Sigmodon hispidus</name>
    <name type="common">Hispid cotton rat</name>
    <dbReference type="NCBI Taxonomy" id="42415"/>
</organismHost>
<gene>
    <name evidence="1" type="primary">N</name>
</gene>
<protein>
    <recommendedName>
        <fullName evidence="1">Nucleoprotein</fullName>
        <ecNumber evidence="1">3.1.13.-</ecNumber>
    </recommendedName>
    <alternativeName>
        <fullName evidence="1">Nucleocapsid protein</fullName>
    </alternativeName>
    <alternativeName>
        <fullName evidence="1">Protein N</fullName>
    </alternativeName>
</protein>
<evidence type="ECO:0000255" key="1">
    <source>
        <dbReference type="HAMAP-Rule" id="MF_04085"/>
    </source>
</evidence>